<keyword id="KW-0963">Cytoplasm</keyword>
<keyword id="KW-0489">Methyltransferase</keyword>
<keyword id="KW-0698">rRNA processing</keyword>
<keyword id="KW-0949">S-adenosyl-L-methionine</keyword>
<keyword id="KW-0808">Transferase</keyword>
<accession>B4T4X5</accession>
<gene>
    <name evidence="1" type="primary">rlmM</name>
    <name type="ordered locus">SNSL254_A3205</name>
</gene>
<protein>
    <recommendedName>
        <fullName evidence="1">Ribosomal RNA large subunit methyltransferase M</fullName>
        <ecNumber evidence="1">2.1.1.186</ecNumber>
    </recommendedName>
    <alternativeName>
        <fullName evidence="1">23S rRNA (cytidine2498-2'-O)-methyltransferase</fullName>
    </alternativeName>
    <alternativeName>
        <fullName evidence="1">23S rRNA 2'-O-ribose methyltransferase RlmM</fullName>
    </alternativeName>
</protein>
<dbReference type="EC" id="2.1.1.186" evidence="1"/>
<dbReference type="EMBL" id="CP001113">
    <property type="protein sequence ID" value="ACF65366.1"/>
    <property type="molecule type" value="Genomic_DNA"/>
</dbReference>
<dbReference type="RefSeq" id="WP_001045494.1">
    <property type="nucleotide sequence ID" value="NZ_CCMR01000001.1"/>
</dbReference>
<dbReference type="SMR" id="B4T4X5"/>
<dbReference type="KEGG" id="see:SNSL254_A3205"/>
<dbReference type="HOGENOM" id="CLU_043780_0_0_6"/>
<dbReference type="Proteomes" id="UP000008824">
    <property type="component" value="Chromosome"/>
</dbReference>
<dbReference type="GO" id="GO:0005737">
    <property type="term" value="C:cytoplasm"/>
    <property type="evidence" value="ECO:0007669"/>
    <property type="project" value="UniProtKB-SubCell"/>
</dbReference>
<dbReference type="GO" id="GO:0008757">
    <property type="term" value="F:S-adenosylmethionine-dependent methyltransferase activity"/>
    <property type="evidence" value="ECO:0007669"/>
    <property type="project" value="UniProtKB-UniRule"/>
</dbReference>
<dbReference type="GO" id="GO:0032259">
    <property type="term" value="P:methylation"/>
    <property type="evidence" value="ECO:0007669"/>
    <property type="project" value="UniProtKB-KW"/>
</dbReference>
<dbReference type="GO" id="GO:0006364">
    <property type="term" value="P:rRNA processing"/>
    <property type="evidence" value="ECO:0007669"/>
    <property type="project" value="UniProtKB-UniRule"/>
</dbReference>
<dbReference type="FunFam" id="3.30.2300.20:FF:000001">
    <property type="entry name" value="Ribosomal RNA large subunit methyltransferase M"/>
    <property type="match status" value="1"/>
</dbReference>
<dbReference type="FunFam" id="3.30.70.2810:FF:000001">
    <property type="entry name" value="Ribosomal RNA large subunit methyltransferase M"/>
    <property type="match status" value="1"/>
</dbReference>
<dbReference type="FunFam" id="3.40.50.150:FF:000020">
    <property type="entry name" value="Ribosomal RNA large subunit methyltransferase M"/>
    <property type="match status" value="1"/>
</dbReference>
<dbReference type="Gene3D" id="3.30.2300.20">
    <property type="match status" value="1"/>
</dbReference>
<dbReference type="Gene3D" id="3.30.70.2810">
    <property type="match status" value="1"/>
</dbReference>
<dbReference type="Gene3D" id="3.40.50.150">
    <property type="entry name" value="Vaccinia Virus protein VP39"/>
    <property type="match status" value="1"/>
</dbReference>
<dbReference type="HAMAP" id="MF_01551">
    <property type="entry name" value="23SrRNA_methyltr_M"/>
    <property type="match status" value="1"/>
</dbReference>
<dbReference type="InterPro" id="IPR040739">
    <property type="entry name" value="RlmM_FDX"/>
</dbReference>
<dbReference type="InterPro" id="IPR048646">
    <property type="entry name" value="RlmM_THUMP-like"/>
</dbReference>
<dbReference type="InterPro" id="IPR002877">
    <property type="entry name" value="RNA_MeTrfase_FtsJ_dom"/>
</dbReference>
<dbReference type="InterPro" id="IPR011224">
    <property type="entry name" value="rRNA_MeTrfase_M"/>
</dbReference>
<dbReference type="InterPro" id="IPR029063">
    <property type="entry name" value="SAM-dependent_MTases_sf"/>
</dbReference>
<dbReference type="NCBIfam" id="NF008734">
    <property type="entry name" value="PRK11760.1"/>
    <property type="match status" value="1"/>
</dbReference>
<dbReference type="PANTHER" id="PTHR37524">
    <property type="entry name" value="RIBOSOMAL RNA LARGE SUBUNIT METHYLTRANSFERASE M"/>
    <property type="match status" value="1"/>
</dbReference>
<dbReference type="PANTHER" id="PTHR37524:SF2">
    <property type="entry name" value="RIBOSOMAL RNA METHYLTRANSFERASE FTSJ DOMAIN-CONTAINING PROTEIN"/>
    <property type="match status" value="1"/>
</dbReference>
<dbReference type="Pfam" id="PF01728">
    <property type="entry name" value="FtsJ"/>
    <property type="match status" value="1"/>
</dbReference>
<dbReference type="Pfam" id="PF18125">
    <property type="entry name" value="RlmM_FDX"/>
    <property type="match status" value="1"/>
</dbReference>
<dbReference type="Pfam" id="PF21239">
    <property type="entry name" value="RLMM_N"/>
    <property type="match status" value="1"/>
</dbReference>
<dbReference type="PIRSF" id="PIRSF028774">
    <property type="entry name" value="UCP028774"/>
    <property type="match status" value="1"/>
</dbReference>
<dbReference type="SUPFAM" id="SSF53335">
    <property type="entry name" value="S-adenosyl-L-methionine-dependent methyltransferases"/>
    <property type="match status" value="1"/>
</dbReference>
<reference key="1">
    <citation type="journal article" date="2011" name="J. Bacteriol.">
        <title>Comparative genomics of 28 Salmonella enterica isolates: evidence for CRISPR-mediated adaptive sublineage evolution.</title>
        <authorList>
            <person name="Fricke W.F."/>
            <person name="Mammel M.K."/>
            <person name="McDermott P.F."/>
            <person name="Tartera C."/>
            <person name="White D.G."/>
            <person name="Leclerc J.E."/>
            <person name="Ravel J."/>
            <person name="Cebula T.A."/>
        </authorList>
    </citation>
    <scope>NUCLEOTIDE SEQUENCE [LARGE SCALE GENOMIC DNA]</scope>
    <source>
        <strain>SL254</strain>
    </source>
</reference>
<sequence>MNKVVLLCRPGFEKECAAEITDKAGKREIFGFARVKENAGYVIYECYQPEDGEKLISELPFSSLIFARQWFVVGELLQHLPPEDRITPIVGMLQGVVEKGGELRVEVADTNESKELMKFCRKFTVPLRAALRDAGVLTNYETPKRPVVHVFFIAPGCCYTGYSFAHNNSPFYMGIPRLKFPSDAPSRSTLKLEEALHVFIPEDEWDERLANGMYAVDLGACPGGWTYQLVKRNMWVYSVDNGPMAQSLMDTGQVTWLREDGFRYRPNRNNISWMVCDMVEKPAKVTALMAQWLVNGWCRETIFNLKLPMKKRYEEVSHNLAYLQAQLDEHGVNAQIQARQLYHDREEVTVHVRRLWAAVGGRRDER</sequence>
<name>RLMM_SALNS</name>
<feature type="chain" id="PRO_1000201530" description="Ribosomal RNA large subunit methyltransferase M">
    <location>
        <begin position="1"/>
        <end position="366"/>
    </location>
</feature>
<feature type="active site" description="Proton acceptor" evidence="1">
    <location>
        <position position="306"/>
    </location>
</feature>
<feature type="binding site" evidence="1">
    <location>
        <position position="188"/>
    </location>
    <ligand>
        <name>S-adenosyl-L-methionine</name>
        <dbReference type="ChEBI" id="CHEBI:59789"/>
    </ligand>
</feature>
<feature type="binding site" evidence="1">
    <location>
        <begin position="221"/>
        <end position="224"/>
    </location>
    <ligand>
        <name>S-adenosyl-L-methionine</name>
        <dbReference type="ChEBI" id="CHEBI:59789"/>
    </ligand>
</feature>
<feature type="binding site" evidence="1">
    <location>
        <position position="240"/>
    </location>
    <ligand>
        <name>S-adenosyl-L-methionine</name>
        <dbReference type="ChEBI" id="CHEBI:59789"/>
    </ligand>
</feature>
<feature type="binding site" evidence="1">
    <location>
        <position position="260"/>
    </location>
    <ligand>
        <name>S-adenosyl-L-methionine</name>
        <dbReference type="ChEBI" id="CHEBI:59789"/>
    </ligand>
</feature>
<feature type="binding site" evidence="1">
    <location>
        <position position="277"/>
    </location>
    <ligand>
        <name>S-adenosyl-L-methionine</name>
        <dbReference type="ChEBI" id="CHEBI:59789"/>
    </ligand>
</feature>
<evidence type="ECO:0000255" key="1">
    <source>
        <dbReference type="HAMAP-Rule" id="MF_01551"/>
    </source>
</evidence>
<comment type="function">
    <text evidence="1">Catalyzes the 2'-O-methylation at nucleotide C2498 in 23S rRNA.</text>
</comment>
<comment type="catalytic activity">
    <reaction evidence="1">
        <text>cytidine(2498) in 23S rRNA + S-adenosyl-L-methionine = 2'-O-methylcytidine(2498) in 23S rRNA + S-adenosyl-L-homocysteine + H(+)</text>
        <dbReference type="Rhea" id="RHEA:42788"/>
        <dbReference type="Rhea" id="RHEA-COMP:10244"/>
        <dbReference type="Rhea" id="RHEA-COMP:10245"/>
        <dbReference type="ChEBI" id="CHEBI:15378"/>
        <dbReference type="ChEBI" id="CHEBI:57856"/>
        <dbReference type="ChEBI" id="CHEBI:59789"/>
        <dbReference type="ChEBI" id="CHEBI:74495"/>
        <dbReference type="ChEBI" id="CHEBI:82748"/>
        <dbReference type="EC" id="2.1.1.186"/>
    </reaction>
</comment>
<comment type="subunit">
    <text evidence="1">Monomer.</text>
</comment>
<comment type="subcellular location">
    <subcellularLocation>
        <location evidence="1">Cytoplasm</location>
    </subcellularLocation>
</comment>
<comment type="similarity">
    <text evidence="1">Belongs to the class I-like SAM-binding methyltransferase superfamily. RNA methyltransferase RlmE family. RlmM subfamily.</text>
</comment>
<organism>
    <name type="scientific">Salmonella newport (strain SL254)</name>
    <dbReference type="NCBI Taxonomy" id="423368"/>
    <lineage>
        <taxon>Bacteria</taxon>
        <taxon>Pseudomonadati</taxon>
        <taxon>Pseudomonadota</taxon>
        <taxon>Gammaproteobacteria</taxon>
        <taxon>Enterobacterales</taxon>
        <taxon>Enterobacteriaceae</taxon>
        <taxon>Salmonella</taxon>
    </lineage>
</organism>
<proteinExistence type="inferred from homology"/>